<organism>
    <name type="scientific">Chlorobaculum tepidum (strain ATCC 49652 / DSM 12025 / NBRC 103806 / TLS)</name>
    <name type="common">Chlorobium tepidum</name>
    <dbReference type="NCBI Taxonomy" id="194439"/>
    <lineage>
        <taxon>Bacteria</taxon>
        <taxon>Pseudomonadati</taxon>
        <taxon>Chlorobiota</taxon>
        <taxon>Chlorobiia</taxon>
        <taxon>Chlorobiales</taxon>
        <taxon>Chlorobiaceae</taxon>
        <taxon>Chlorobaculum</taxon>
    </lineage>
</organism>
<reference key="1">
    <citation type="journal article" date="2002" name="Proc. Natl. Acad. Sci. U.S.A.">
        <title>The complete genome sequence of Chlorobium tepidum TLS, a photosynthetic, anaerobic, green-sulfur bacterium.</title>
        <authorList>
            <person name="Eisen J.A."/>
            <person name="Nelson K.E."/>
            <person name="Paulsen I.T."/>
            <person name="Heidelberg J.F."/>
            <person name="Wu M."/>
            <person name="Dodson R.J."/>
            <person name="DeBoy R.T."/>
            <person name="Gwinn M.L."/>
            <person name="Nelson W.C."/>
            <person name="Haft D.H."/>
            <person name="Hickey E.K."/>
            <person name="Peterson J.D."/>
            <person name="Durkin A.S."/>
            <person name="Kolonay J.F."/>
            <person name="Yang F."/>
            <person name="Holt I.E."/>
            <person name="Umayam L.A."/>
            <person name="Mason T.M."/>
            <person name="Brenner M."/>
            <person name="Shea T.P."/>
            <person name="Parksey D.S."/>
            <person name="Nierman W.C."/>
            <person name="Feldblyum T.V."/>
            <person name="Hansen C.L."/>
            <person name="Craven M.B."/>
            <person name="Radune D."/>
            <person name="Vamathevan J.J."/>
            <person name="Khouri H.M."/>
            <person name="White O."/>
            <person name="Gruber T.M."/>
            <person name="Ketchum K.A."/>
            <person name="Venter J.C."/>
            <person name="Tettelin H."/>
            <person name="Bryant D.A."/>
            <person name="Fraser C.M."/>
        </authorList>
    </citation>
    <scope>NUCLEOTIDE SEQUENCE [LARGE SCALE GENOMIC DNA]</scope>
    <source>
        <strain>ATCC 49652 / DSM 12025 / NBRC 103806 / TLS</strain>
    </source>
</reference>
<keyword id="KW-0046">Antibiotic resistance</keyword>
<keyword id="KW-0067">ATP-binding</keyword>
<keyword id="KW-0997">Cell inner membrane</keyword>
<keyword id="KW-1003">Cell membrane</keyword>
<keyword id="KW-0472">Membrane</keyword>
<keyword id="KW-0547">Nucleotide-binding</keyword>
<keyword id="KW-1185">Reference proteome</keyword>
<keyword id="KW-1278">Translocase</keyword>
<keyword id="KW-0812">Transmembrane</keyword>
<keyword id="KW-1133">Transmembrane helix</keyword>
<keyword id="KW-0813">Transport</keyword>
<gene>
    <name evidence="1" type="primary">macB</name>
    <name type="ordered locus">CT0378</name>
</gene>
<protein>
    <recommendedName>
        <fullName evidence="1">Macrolide export ATP-binding/permease protein MacB</fullName>
        <ecNumber evidence="1">7.6.2.-</ecNumber>
    </recommendedName>
</protein>
<evidence type="ECO:0000255" key="1">
    <source>
        <dbReference type="HAMAP-Rule" id="MF_01720"/>
    </source>
</evidence>
<sequence length="651" mass="70360">MIEIVNVTKTYRIGESSVKALDGVSLTIGQGEFVAIMGASGSGKSTLMHILGLLDVPDTGQYRLMGKEVSRMSDDELAGIRNNVAGFVFQQFHLLSRMSTIDNVVLPCIYSGQRGDFRKDALKRLEMVGLAQRSDHRPNQMSGGEQQRVAIARALIRDPMLIFADEPTGNLDTKNSHEIMRILTDLHRQGKTIIMVTHETDIAEFADRVITMKDGVVVDDRKKQDARLNPQMPQGGMEAAHSALFQPSRLLGFVVQAFQSIASNKIRTFLSVLGILVGVASVIAMMALGTGAKASMEEQLKSMGSNLLSVRGGSAKIGGASQGFGTVTRFTEKDAAAIQAIPNLIDHVSGDVTGSGQLVYLDKNWSTSVEGVDYDYGEMRAAIPTVGRWFTREEIQERAKVAILGTTVAMQLFGDADPVDKIIKINRINFRVIGVAPAKGFAGPRDQDDVVYIPVSTAMYRVLGKLYLDGIYVEVSSAENIAPATQAIDALIRKRHKLAADDQDSFNIRDMTQFQQMLSATTQTMSMLLGSIAAISLVVGGIGIMNIMLVSVTERTREIGLRKAIGARKGDIMLQFLIESVGMTLSGGIIGIVVGVGVSVMLSAFAGWAVKTSMFSVVLATGFSVLIGLFFGLWPARKAAALKPVEALRYE</sequence>
<comment type="function">
    <text evidence="1">Non-canonical ABC transporter that contains transmembrane domains (TMD), which form a pore in the inner membrane, and an ATP-binding domain (NBD), which is responsible for energy generation. Confers resistance against macrolides.</text>
</comment>
<comment type="subunit">
    <text evidence="1">Homodimer.</text>
</comment>
<comment type="subcellular location">
    <subcellularLocation>
        <location evidence="1">Cell inner membrane</location>
        <topology evidence="1">Multi-pass membrane protein</topology>
    </subcellularLocation>
</comment>
<comment type="similarity">
    <text evidence="1">Belongs to the ABC transporter superfamily. Macrolide exporter (TC 3.A.1.122) family.</text>
</comment>
<proteinExistence type="inferred from homology"/>
<dbReference type="EC" id="7.6.2.-" evidence="1"/>
<dbReference type="EMBL" id="AE006470">
    <property type="protein sequence ID" value="AAM71624.1"/>
    <property type="molecule type" value="Genomic_DNA"/>
</dbReference>
<dbReference type="RefSeq" id="NP_661282.1">
    <property type="nucleotide sequence ID" value="NC_002932.3"/>
</dbReference>
<dbReference type="RefSeq" id="WP_010932070.1">
    <property type="nucleotide sequence ID" value="NC_002932.3"/>
</dbReference>
<dbReference type="SMR" id="Q8KFE9"/>
<dbReference type="STRING" id="194439.CT0378"/>
<dbReference type="EnsemblBacteria" id="AAM71624">
    <property type="protein sequence ID" value="AAM71624"/>
    <property type="gene ID" value="CT0378"/>
</dbReference>
<dbReference type="KEGG" id="cte:CT0378"/>
<dbReference type="PATRIC" id="fig|194439.7.peg.365"/>
<dbReference type="eggNOG" id="COG0577">
    <property type="taxonomic scope" value="Bacteria"/>
</dbReference>
<dbReference type="eggNOG" id="COG1136">
    <property type="taxonomic scope" value="Bacteria"/>
</dbReference>
<dbReference type="HOGENOM" id="CLU_000604_78_2_10"/>
<dbReference type="OrthoDB" id="9769100at2"/>
<dbReference type="Proteomes" id="UP000001007">
    <property type="component" value="Chromosome"/>
</dbReference>
<dbReference type="GO" id="GO:0005886">
    <property type="term" value="C:plasma membrane"/>
    <property type="evidence" value="ECO:0007669"/>
    <property type="project" value="UniProtKB-SubCell"/>
</dbReference>
<dbReference type="GO" id="GO:0005524">
    <property type="term" value="F:ATP binding"/>
    <property type="evidence" value="ECO:0007669"/>
    <property type="project" value="UniProtKB-KW"/>
</dbReference>
<dbReference type="GO" id="GO:0016887">
    <property type="term" value="F:ATP hydrolysis activity"/>
    <property type="evidence" value="ECO:0007669"/>
    <property type="project" value="InterPro"/>
</dbReference>
<dbReference type="GO" id="GO:0022857">
    <property type="term" value="F:transmembrane transporter activity"/>
    <property type="evidence" value="ECO:0007669"/>
    <property type="project" value="TreeGrafter"/>
</dbReference>
<dbReference type="GO" id="GO:0046677">
    <property type="term" value="P:response to antibiotic"/>
    <property type="evidence" value="ECO:0007669"/>
    <property type="project" value="UniProtKB-KW"/>
</dbReference>
<dbReference type="CDD" id="cd03255">
    <property type="entry name" value="ABC_MJ0796_LolCDE_FtsE"/>
    <property type="match status" value="1"/>
</dbReference>
<dbReference type="FunFam" id="3.40.50.300:FF:000032">
    <property type="entry name" value="Export ABC transporter ATP-binding protein"/>
    <property type="match status" value="1"/>
</dbReference>
<dbReference type="Gene3D" id="3.40.50.300">
    <property type="entry name" value="P-loop containing nucleotide triphosphate hydrolases"/>
    <property type="match status" value="1"/>
</dbReference>
<dbReference type="InterPro" id="IPR003593">
    <property type="entry name" value="AAA+_ATPase"/>
</dbReference>
<dbReference type="InterPro" id="IPR003838">
    <property type="entry name" value="ABC3_permease_C"/>
</dbReference>
<dbReference type="InterPro" id="IPR003439">
    <property type="entry name" value="ABC_transporter-like_ATP-bd"/>
</dbReference>
<dbReference type="InterPro" id="IPR017871">
    <property type="entry name" value="ABC_transporter-like_CS"/>
</dbReference>
<dbReference type="InterPro" id="IPR017911">
    <property type="entry name" value="MacB-like_ATP-bd"/>
</dbReference>
<dbReference type="InterPro" id="IPR025857">
    <property type="entry name" value="MacB_PCD"/>
</dbReference>
<dbReference type="InterPro" id="IPR050250">
    <property type="entry name" value="Macrolide_Exporter_MacB"/>
</dbReference>
<dbReference type="InterPro" id="IPR027417">
    <property type="entry name" value="P-loop_NTPase"/>
</dbReference>
<dbReference type="PANTHER" id="PTHR30572:SF4">
    <property type="entry name" value="ABC TRANSPORTER PERMEASE YTRF"/>
    <property type="match status" value="1"/>
</dbReference>
<dbReference type="PANTHER" id="PTHR30572">
    <property type="entry name" value="MEMBRANE COMPONENT OF TRANSPORTER-RELATED"/>
    <property type="match status" value="1"/>
</dbReference>
<dbReference type="Pfam" id="PF00005">
    <property type="entry name" value="ABC_tran"/>
    <property type="match status" value="1"/>
</dbReference>
<dbReference type="Pfam" id="PF02687">
    <property type="entry name" value="FtsX"/>
    <property type="match status" value="1"/>
</dbReference>
<dbReference type="Pfam" id="PF12704">
    <property type="entry name" value="MacB_PCD"/>
    <property type="match status" value="1"/>
</dbReference>
<dbReference type="SMART" id="SM00382">
    <property type="entry name" value="AAA"/>
    <property type="match status" value="1"/>
</dbReference>
<dbReference type="SUPFAM" id="SSF52540">
    <property type="entry name" value="P-loop containing nucleoside triphosphate hydrolases"/>
    <property type="match status" value="1"/>
</dbReference>
<dbReference type="PROSITE" id="PS00211">
    <property type="entry name" value="ABC_TRANSPORTER_1"/>
    <property type="match status" value="1"/>
</dbReference>
<dbReference type="PROSITE" id="PS50893">
    <property type="entry name" value="ABC_TRANSPORTER_2"/>
    <property type="match status" value="1"/>
</dbReference>
<dbReference type="PROSITE" id="PS51267">
    <property type="entry name" value="MACB"/>
    <property type="match status" value="1"/>
</dbReference>
<feature type="chain" id="PRO_0000269936" description="Macrolide export ATP-binding/permease protein MacB">
    <location>
        <begin position="1"/>
        <end position="651"/>
    </location>
</feature>
<feature type="transmembrane region" description="Helical" evidence="1">
    <location>
        <begin position="269"/>
        <end position="289"/>
    </location>
</feature>
<feature type="transmembrane region" description="Helical" evidence="1">
    <location>
        <begin position="532"/>
        <end position="552"/>
    </location>
</feature>
<feature type="transmembrane region" description="Helical" evidence="1">
    <location>
        <begin position="589"/>
        <end position="609"/>
    </location>
</feature>
<feature type="transmembrane region" description="Helical" evidence="1">
    <location>
        <begin position="614"/>
        <end position="634"/>
    </location>
</feature>
<feature type="domain" description="ABC transporter" evidence="1">
    <location>
        <begin position="2"/>
        <end position="239"/>
    </location>
</feature>
<feature type="binding site" evidence="1">
    <location>
        <begin position="38"/>
        <end position="45"/>
    </location>
    <ligand>
        <name>ATP</name>
        <dbReference type="ChEBI" id="CHEBI:30616"/>
    </ligand>
</feature>
<name>MACB_CHLTE</name>
<accession>Q8KFE9</accession>